<reference evidence="10" key="1">
    <citation type="journal article" date="2014" name="BMC Biol.">
        <title>A comprehensive evaluation of rodent malaria parasite genomes and gene expression.</title>
        <authorList>
            <person name="Otto T.D."/>
            <person name="Bohme U."/>
            <person name="Jackson A.P."/>
            <person name="Hunt M."/>
            <person name="Franke-Fayard B."/>
            <person name="Hoeijmakers W.A."/>
            <person name="Religa A.A."/>
            <person name="Robertson L."/>
            <person name="Sanders M."/>
            <person name="Ogun S.A."/>
            <person name="Cunningham D."/>
            <person name="Erhart A."/>
            <person name="Billker O."/>
            <person name="Khan S.M."/>
            <person name="Stunnenberg H.G."/>
            <person name="Langhorne J."/>
            <person name="Holder A.A."/>
            <person name="Waters A.P."/>
            <person name="Newbold C.I."/>
            <person name="Pain A."/>
            <person name="Berriman M."/>
            <person name="Janse C.J."/>
        </authorList>
    </citation>
    <scope>NUCLEOTIDE SEQUENCE [LARGE SCALE GENOMIC DNA]</scope>
    <source>
        <strain evidence="10">ANKA</strain>
    </source>
</reference>
<reference evidence="8" key="2">
    <citation type="journal article" date="2014" name="PLoS ONE">
        <title>Identification of vital and dispensable sulfur utilization factors in the Plasmodium apicoplast.</title>
        <authorList>
            <person name="Haussig J.M."/>
            <person name="Matuschewski K."/>
            <person name="Kooij T.W."/>
        </authorList>
    </citation>
    <scope>SUBCELLULAR LOCATION</scope>
    <scope>DEVELOPMENTAL STAGE</scope>
    <scope>DISRUPTION PHENOTYPE</scope>
</reference>
<reference evidence="8" key="3">
    <citation type="journal article" date="2017" name="FEBS J.">
        <title>[Fe-S] cluster assembly in the apicoplast and its indispensability in mosquito stages of the malaria parasite.</title>
        <authorList>
            <person name="Charan M."/>
            <person name="Choudhary H.H."/>
            <person name="Singh N."/>
            <person name="Sadik M."/>
            <person name="Siddiqi M.I."/>
            <person name="Mishra S."/>
            <person name="Habib S."/>
        </authorList>
    </citation>
    <scope>FUNCTION</scope>
    <scope>DISRUPTION PHENOTYPE</scope>
</reference>
<feature type="signal peptide" evidence="3">
    <location>
        <begin position="1"/>
        <end position="18"/>
    </location>
</feature>
<feature type="chain" id="PRO_0000459467" description="Putative cysteine desulfurase PbSufS">
    <location>
        <begin position="19"/>
        <end position="532"/>
    </location>
</feature>
<feature type="active site" description="Cysteine persulfide intermediate" evidence="1">
    <location>
        <position position="480"/>
    </location>
</feature>
<feature type="modified residue" description="N6-(pyridoxal phosphate)lysine" evidence="1">
    <location>
        <position position="286"/>
    </location>
</feature>
<protein>
    <recommendedName>
        <fullName evidence="7">Putative cysteine desulfurase PbSufS</fullName>
        <shortName evidence="7">PbSufS</shortName>
        <ecNumber evidence="2">2.8.1.7</ecNumber>
    </recommendedName>
</protein>
<proteinExistence type="evidence at protein level"/>
<evidence type="ECO:0000250" key="1">
    <source>
        <dbReference type="UniProtKB" id="O32164"/>
    </source>
</evidence>
<evidence type="ECO:0000250" key="2">
    <source>
        <dbReference type="UniProtKB" id="Q8IBT4"/>
    </source>
</evidence>
<evidence type="ECO:0000255" key="3"/>
<evidence type="ECO:0000269" key="4">
    <source>
    </source>
</evidence>
<evidence type="ECO:0000269" key="5">
    <source>
    </source>
</evidence>
<evidence type="ECO:0000303" key="6">
    <source>
    </source>
</evidence>
<evidence type="ECO:0000303" key="7">
    <source>
    </source>
</evidence>
<evidence type="ECO:0000305" key="8"/>
<evidence type="ECO:0000312" key="9">
    <source>
        <dbReference type="EMBL" id="VUC54818.1"/>
    </source>
</evidence>
<evidence type="ECO:0000312" key="10">
    <source>
        <dbReference type="Proteomes" id="UP000074855"/>
    </source>
</evidence>
<sequence>MNNESICILLLLFVKITSYYSYYISPLKKNIYTRTIYKGHILKLKNDKPEIDNNIINYFKNIRSDYPFFQQNNSPIYFDNAATTHKPKSVIEKIKNFYYYNNSNIHRGIYKISRNATDNYEHVRNIVQKYINCDSSDEIIFTSGATYGINMVCNIIMDKIIKNENDEIYISYLEHNSNIIPWQENIRNKKKGKLKYIPLKKNGYINIKKFVEKINDNTKIVSINHVSNVLGNIQNINLIIKKIKKKNPNIIVIIDAAQSFPHLKYDIKKMKLKNEDPDILVTSGHKFCAPFGSGFVYIKKKLTHTSKTNPFLYGSNIITDVNKYRSKFVSSPYIFETGTQNISAILAMGEAIKYLQKINDEGNAYKYEMYLYDLFLFYLRSFLTNHLVELPYIPEPNTPIKPDKMRTTMQVRNSKVDDKYFHSEIQNQDNDYLKIFVHNTRKDNKKKIAILPLWSLNFTSFDLVTFLDFKNICIRSGHHCASLLHNNFFNINESSRISIMFYNTPEEVQYLAEQISATTHMLHSMRRNGKAV</sequence>
<keyword id="KW-0933">Apicoplast</keyword>
<keyword id="KW-0934">Plastid</keyword>
<keyword id="KW-0663">Pyridoxal phosphate</keyword>
<keyword id="KW-1185">Reference proteome</keyword>
<keyword id="KW-0732">Signal</keyword>
<keyword id="KW-0808">Transferase</keyword>
<dbReference type="EC" id="2.8.1.7" evidence="2"/>
<dbReference type="EMBL" id="LK023121">
    <property type="protein sequence ID" value="VUC54818.1"/>
    <property type="molecule type" value="Genomic_DNA"/>
</dbReference>
<dbReference type="SMR" id="A0A509AF62"/>
<dbReference type="FunCoup" id="A0A509AF62">
    <property type="interactions" value="14"/>
</dbReference>
<dbReference type="STRING" id="5823.A0A509AF62"/>
<dbReference type="VEuPathDB" id="PlasmoDB:PBANKA_0614300"/>
<dbReference type="InParanoid" id="A0A509AF62"/>
<dbReference type="OMA" id="LVTWQQI"/>
<dbReference type="UniPathway" id="UPA00266"/>
<dbReference type="Proteomes" id="UP000074855">
    <property type="component" value="Chromosome 6"/>
</dbReference>
<dbReference type="GO" id="GO:0020011">
    <property type="term" value="C:apicoplast"/>
    <property type="evidence" value="ECO:0007669"/>
    <property type="project" value="UniProtKB-SubCell"/>
</dbReference>
<dbReference type="GO" id="GO:0016740">
    <property type="term" value="F:transferase activity"/>
    <property type="evidence" value="ECO:0007669"/>
    <property type="project" value="UniProtKB-KW"/>
</dbReference>
<dbReference type="Gene3D" id="3.90.1150.10">
    <property type="entry name" value="Aspartate Aminotransferase, domain 1"/>
    <property type="match status" value="1"/>
</dbReference>
<dbReference type="Gene3D" id="3.40.640.10">
    <property type="entry name" value="Type I PLP-dependent aspartate aminotransferase-like (Major domain)"/>
    <property type="match status" value="1"/>
</dbReference>
<dbReference type="InterPro" id="IPR000192">
    <property type="entry name" value="Aminotrans_V_dom"/>
</dbReference>
<dbReference type="InterPro" id="IPR015424">
    <property type="entry name" value="PyrdxlP-dep_Trfase"/>
</dbReference>
<dbReference type="InterPro" id="IPR015421">
    <property type="entry name" value="PyrdxlP-dep_Trfase_major"/>
</dbReference>
<dbReference type="InterPro" id="IPR015422">
    <property type="entry name" value="PyrdxlP-dep_Trfase_small"/>
</dbReference>
<dbReference type="PANTHER" id="PTHR43586">
    <property type="entry name" value="CYSTEINE DESULFURASE"/>
    <property type="match status" value="1"/>
</dbReference>
<dbReference type="PANTHER" id="PTHR43586:SF8">
    <property type="entry name" value="CYSTEINE DESULFURASE 1, CHLOROPLASTIC"/>
    <property type="match status" value="1"/>
</dbReference>
<dbReference type="Pfam" id="PF00266">
    <property type="entry name" value="Aminotran_5"/>
    <property type="match status" value="2"/>
</dbReference>
<dbReference type="SUPFAM" id="SSF53383">
    <property type="entry name" value="PLP-dependent transferases"/>
    <property type="match status" value="1"/>
</dbReference>
<organism evidence="10">
    <name type="scientific">Plasmodium berghei (strain Anka)</name>
    <dbReference type="NCBI Taxonomy" id="5823"/>
    <lineage>
        <taxon>Eukaryota</taxon>
        <taxon>Sar</taxon>
        <taxon>Alveolata</taxon>
        <taxon>Apicomplexa</taxon>
        <taxon>Aconoidasida</taxon>
        <taxon>Haemosporida</taxon>
        <taxon>Plasmodiidae</taxon>
        <taxon>Plasmodium</taxon>
        <taxon>Plasmodium (Vinckeia)</taxon>
    </lineage>
</organism>
<gene>
    <name evidence="6 7" type="primary">SufS</name>
    <name evidence="9" type="ORF">PBANKA_0614300</name>
</gene>
<accession>A0A509AF62</accession>
<comment type="function">
    <text evidence="2 5">Catalyzes sulfur activation and mobilization in sulfur mobilization (SUF) pathway for iron-sulfur (Fe-S) cluster biogenesis (By similarity). Active when in complex with a partner protein SufE (By similarity). Required for apicoplast maintenance (By similarity). Plays a role in the development of sporozoites in oocysts in mosquitoes (PubMed:28695709).</text>
</comment>
<comment type="catalytic activity">
    <reaction evidence="2">
        <text>(sulfur carrier)-H + L-cysteine = (sulfur carrier)-SH + L-alanine</text>
        <dbReference type="Rhea" id="RHEA:43892"/>
        <dbReference type="Rhea" id="RHEA-COMP:14737"/>
        <dbReference type="Rhea" id="RHEA-COMP:14739"/>
        <dbReference type="ChEBI" id="CHEBI:29917"/>
        <dbReference type="ChEBI" id="CHEBI:35235"/>
        <dbReference type="ChEBI" id="CHEBI:57972"/>
        <dbReference type="ChEBI" id="CHEBI:64428"/>
        <dbReference type="EC" id="2.8.1.7"/>
    </reaction>
    <physiologicalReaction direction="left-to-right" evidence="8">
        <dbReference type="Rhea" id="RHEA:43893"/>
    </physiologicalReaction>
</comment>
<comment type="cofactor">
    <cofactor evidence="2">
        <name>pyridoxal 5'-phosphate</name>
        <dbReference type="ChEBI" id="CHEBI:597326"/>
    </cofactor>
</comment>
<comment type="pathway">
    <text evidence="8">Cofactor biosynthesis; iron-sulfur cluster biosynthesis.</text>
</comment>
<comment type="subunit">
    <text evidence="2">Monomer (By similarity). Interacts with SufE; interaction enhances cysteine desulfurase activity of SufS (By similarity).</text>
</comment>
<comment type="subcellular location">
    <subcellularLocation>
        <location evidence="4">Plastid</location>
        <location evidence="4">Apicoplast</location>
    </subcellularLocation>
</comment>
<comment type="developmental stage">
    <text evidence="4">Expressed in trophozoites (at protein level) (PubMed:24586983). Expressed in developing liver stage parasites (PubMed:24586983).</text>
</comment>
<comment type="disruption phenotype">
    <text evidence="4 5">Essential for blood-stage parasite survival (PubMed:24586983, PubMed:28695709). Conditional knockout in the mosquito stages does not affect the number of oocysts and development of midgut- and salivary gland-associated sporozoites up to day 14 post-infection (PubMed:28695709). On day 22 post-infection, fewer oocysts show sporulation and the number of salivary gland sporozoites is reduced (PubMed:28695709).</text>
</comment>
<comment type="similarity">
    <text evidence="8">Belongs to the class-V pyridoxal-phosphate-dependent aminotransferase family. Csd subfamily.</text>
</comment>
<name>SUFS_PLABA</name>